<protein>
    <recommendedName>
        <fullName evidence="1">ATP synthase subunit beta, chloroplastic</fullName>
        <ecNumber evidence="1">7.1.2.2</ecNumber>
    </recommendedName>
    <alternativeName>
        <fullName evidence="1">ATP synthase F1 sector subunit beta</fullName>
    </alternativeName>
    <alternativeName>
        <fullName evidence="1">F-ATPase subunit beta</fullName>
    </alternativeName>
</protein>
<feature type="chain" id="PRO_0000254479" description="ATP synthase subunit beta, chloroplastic">
    <location>
        <begin position="1"/>
        <end position="475"/>
    </location>
</feature>
<feature type="binding site" evidence="1">
    <location>
        <begin position="156"/>
        <end position="163"/>
    </location>
    <ligand>
        <name>ATP</name>
        <dbReference type="ChEBI" id="CHEBI:30616"/>
    </ligand>
</feature>
<evidence type="ECO:0000255" key="1">
    <source>
        <dbReference type="HAMAP-Rule" id="MF_01347"/>
    </source>
</evidence>
<gene>
    <name evidence="1" type="primary">atpB</name>
    <name type="ordered locus">Grc000130</name>
</gene>
<accession>Q6B8S4</accession>
<dbReference type="EC" id="7.1.2.2" evidence="1"/>
<dbReference type="EMBL" id="AY673996">
    <property type="protein sequence ID" value="AAT79711.1"/>
    <property type="molecule type" value="Genomic_DNA"/>
</dbReference>
<dbReference type="RefSeq" id="YP_063636.1">
    <property type="nucleotide sequence ID" value="NC_006137.1"/>
</dbReference>
<dbReference type="SMR" id="Q6B8S4"/>
<dbReference type="GeneID" id="2943935"/>
<dbReference type="GO" id="GO:0009535">
    <property type="term" value="C:chloroplast thylakoid membrane"/>
    <property type="evidence" value="ECO:0007669"/>
    <property type="project" value="UniProtKB-SubCell"/>
</dbReference>
<dbReference type="GO" id="GO:0005739">
    <property type="term" value="C:mitochondrion"/>
    <property type="evidence" value="ECO:0007669"/>
    <property type="project" value="GOC"/>
</dbReference>
<dbReference type="GO" id="GO:0045259">
    <property type="term" value="C:proton-transporting ATP synthase complex"/>
    <property type="evidence" value="ECO:0007669"/>
    <property type="project" value="UniProtKB-KW"/>
</dbReference>
<dbReference type="GO" id="GO:0005524">
    <property type="term" value="F:ATP binding"/>
    <property type="evidence" value="ECO:0007669"/>
    <property type="project" value="UniProtKB-UniRule"/>
</dbReference>
<dbReference type="GO" id="GO:0016887">
    <property type="term" value="F:ATP hydrolysis activity"/>
    <property type="evidence" value="ECO:0007669"/>
    <property type="project" value="InterPro"/>
</dbReference>
<dbReference type="GO" id="GO:0046933">
    <property type="term" value="F:proton-transporting ATP synthase activity, rotational mechanism"/>
    <property type="evidence" value="ECO:0007669"/>
    <property type="project" value="UniProtKB-UniRule"/>
</dbReference>
<dbReference type="GO" id="GO:0042776">
    <property type="term" value="P:proton motive force-driven mitochondrial ATP synthesis"/>
    <property type="evidence" value="ECO:0007669"/>
    <property type="project" value="TreeGrafter"/>
</dbReference>
<dbReference type="CDD" id="cd18110">
    <property type="entry name" value="ATP-synt_F1_beta_C"/>
    <property type="match status" value="1"/>
</dbReference>
<dbReference type="CDD" id="cd18115">
    <property type="entry name" value="ATP-synt_F1_beta_N"/>
    <property type="match status" value="1"/>
</dbReference>
<dbReference type="CDD" id="cd01133">
    <property type="entry name" value="F1-ATPase_beta_CD"/>
    <property type="match status" value="1"/>
</dbReference>
<dbReference type="FunFam" id="1.10.1140.10:FF:000001">
    <property type="entry name" value="ATP synthase subunit beta"/>
    <property type="match status" value="1"/>
</dbReference>
<dbReference type="FunFam" id="2.40.10.170:FF:000005">
    <property type="entry name" value="ATP synthase subunit beta"/>
    <property type="match status" value="1"/>
</dbReference>
<dbReference type="FunFam" id="3.40.50.12240:FF:000006">
    <property type="entry name" value="ATP synthase subunit beta"/>
    <property type="match status" value="1"/>
</dbReference>
<dbReference type="FunFam" id="3.40.50.300:FF:000026">
    <property type="entry name" value="ATP synthase subunit beta"/>
    <property type="match status" value="1"/>
</dbReference>
<dbReference type="Gene3D" id="2.40.10.170">
    <property type="match status" value="1"/>
</dbReference>
<dbReference type="Gene3D" id="1.10.1140.10">
    <property type="entry name" value="Bovine Mitochondrial F1-atpase, Atp Synthase Beta Chain, Chain D, domain 3"/>
    <property type="match status" value="1"/>
</dbReference>
<dbReference type="Gene3D" id="3.40.50.300">
    <property type="entry name" value="P-loop containing nucleotide triphosphate hydrolases"/>
    <property type="match status" value="1"/>
</dbReference>
<dbReference type="HAMAP" id="MF_01347">
    <property type="entry name" value="ATP_synth_beta_bact"/>
    <property type="match status" value="1"/>
</dbReference>
<dbReference type="InterPro" id="IPR003593">
    <property type="entry name" value="AAA+_ATPase"/>
</dbReference>
<dbReference type="InterPro" id="IPR055190">
    <property type="entry name" value="ATP-synt_VA_C"/>
</dbReference>
<dbReference type="InterPro" id="IPR005722">
    <property type="entry name" value="ATP_synth_F1_bsu"/>
</dbReference>
<dbReference type="InterPro" id="IPR020003">
    <property type="entry name" value="ATPase_a/bsu_AS"/>
</dbReference>
<dbReference type="InterPro" id="IPR050053">
    <property type="entry name" value="ATPase_alpha/beta_chains"/>
</dbReference>
<dbReference type="InterPro" id="IPR004100">
    <property type="entry name" value="ATPase_F1/V1/A1_a/bsu_N"/>
</dbReference>
<dbReference type="InterPro" id="IPR036121">
    <property type="entry name" value="ATPase_F1/V1/A1_a/bsu_N_sf"/>
</dbReference>
<dbReference type="InterPro" id="IPR000194">
    <property type="entry name" value="ATPase_F1/V1/A1_a/bsu_nucl-bd"/>
</dbReference>
<dbReference type="InterPro" id="IPR024034">
    <property type="entry name" value="ATPase_F1/V1_b/a_C"/>
</dbReference>
<dbReference type="InterPro" id="IPR027417">
    <property type="entry name" value="P-loop_NTPase"/>
</dbReference>
<dbReference type="NCBIfam" id="TIGR01039">
    <property type="entry name" value="atpD"/>
    <property type="match status" value="1"/>
</dbReference>
<dbReference type="PANTHER" id="PTHR15184">
    <property type="entry name" value="ATP SYNTHASE"/>
    <property type="match status" value="1"/>
</dbReference>
<dbReference type="PANTHER" id="PTHR15184:SF71">
    <property type="entry name" value="ATP SYNTHASE SUBUNIT BETA, MITOCHONDRIAL"/>
    <property type="match status" value="1"/>
</dbReference>
<dbReference type="Pfam" id="PF00006">
    <property type="entry name" value="ATP-synt_ab"/>
    <property type="match status" value="1"/>
</dbReference>
<dbReference type="Pfam" id="PF02874">
    <property type="entry name" value="ATP-synt_ab_N"/>
    <property type="match status" value="1"/>
</dbReference>
<dbReference type="Pfam" id="PF22919">
    <property type="entry name" value="ATP-synt_VA_C"/>
    <property type="match status" value="1"/>
</dbReference>
<dbReference type="SMART" id="SM00382">
    <property type="entry name" value="AAA"/>
    <property type="match status" value="1"/>
</dbReference>
<dbReference type="SUPFAM" id="SSF47917">
    <property type="entry name" value="C-terminal domain of alpha and beta subunits of F1 ATP synthase"/>
    <property type="match status" value="1"/>
</dbReference>
<dbReference type="SUPFAM" id="SSF50615">
    <property type="entry name" value="N-terminal domain of alpha and beta subunits of F1 ATP synthase"/>
    <property type="match status" value="1"/>
</dbReference>
<dbReference type="SUPFAM" id="SSF52540">
    <property type="entry name" value="P-loop containing nucleoside triphosphate hydrolases"/>
    <property type="match status" value="1"/>
</dbReference>
<dbReference type="PROSITE" id="PS00152">
    <property type="entry name" value="ATPASE_ALPHA_BETA"/>
    <property type="match status" value="1"/>
</dbReference>
<keyword id="KW-0066">ATP synthesis</keyword>
<keyword id="KW-0067">ATP-binding</keyword>
<keyword id="KW-0139">CF(1)</keyword>
<keyword id="KW-0150">Chloroplast</keyword>
<keyword id="KW-0375">Hydrogen ion transport</keyword>
<keyword id="KW-0406">Ion transport</keyword>
<keyword id="KW-0472">Membrane</keyword>
<keyword id="KW-0547">Nucleotide-binding</keyword>
<keyword id="KW-0934">Plastid</keyword>
<keyword id="KW-0793">Thylakoid</keyword>
<keyword id="KW-1278">Translocase</keyword>
<keyword id="KW-0813">Transport</keyword>
<reference key="1">
    <citation type="journal article" date="2004" name="J. Mol. Evol.">
        <title>Comparative analysis of the complete plastid genome sequence of the red alga Gracilaria tenuistipitata var. liui provides insights into the evolution of rhodoplasts and their relationship to other plastids.</title>
        <authorList>
            <person name="Hagopian J.C."/>
            <person name="Reis M."/>
            <person name="Kitajima J.P."/>
            <person name="Bhattacharya D."/>
            <person name="de Oliveira M.C."/>
        </authorList>
    </citation>
    <scope>NUCLEOTIDE SEQUENCE [LARGE SCALE GENOMIC DNA]</scope>
</reference>
<geneLocation type="chloroplast"/>
<name>ATPB_GRATL</name>
<proteinExistence type="inferred from homology"/>
<sequence length="475" mass="51264">MQMVSIKNQGCVTQIIGPVLDIEFPNGQLPKVFNALKVKGPENIITCEVQQLLGDNRVRAVAMSSTEGLKRGIEVTDTGAPITVPVGIPTLGRIFNVLGEPVDNLGDIQSEDSLPIHRAAPSFTQLETKPSIFETGIKVVDLLAPYRKGGKIGLFGGAGVGKTVLIMELINNIAKAHGGVSVFGGVGERTREGNDLYEEMKESKVINADNLKESKVALVYGQMNEPPGARMRVGLTALTMAEYFRDINKQDVLLFIDNIFRFVQAGSEVSALLGRMPSAVGYQPTLATEMGTLQERITSTTDGSITSIQAVYVPADDLTDPAPATTFAHLDATTVLSRSLAAKGIYPAVDPLGSTSTMLQPSIVGSQHYSTAQQIKSTLQRYKELQDIIAILGLDELSEDDRLTVARARKIERFLSQPFFVAEVFTGSPGKYVSLEDSIKGFNMILGGELDDLPEQAFYLVGNIDEAISKAEKLK</sequence>
<organism>
    <name type="scientific">Gracilaria tenuistipitata var. liui</name>
    <name type="common">Red alga</name>
    <dbReference type="NCBI Taxonomy" id="285951"/>
    <lineage>
        <taxon>Eukaryota</taxon>
        <taxon>Rhodophyta</taxon>
        <taxon>Florideophyceae</taxon>
        <taxon>Rhodymeniophycidae</taxon>
        <taxon>Gracilariales</taxon>
        <taxon>Gracilariaceae</taxon>
        <taxon>Gracilaria</taxon>
        <taxon>Gracilaria tenuistipitata</taxon>
    </lineage>
</organism>
<comment type="function">
    <text evidence="1">Produces ATP from ADP in the presence of a proton gradient across the membrane. The catalytic sites are hosted primarily by the beta subunits.</text>
</comment>
<comment type="catalytic activity">
    <reaction evidence="1">
        <text>ATP + H2O + 4 H(+)(in) = ADP + phosphate + 5 H(+)(out)</text>
        <dbReference type="Rhea" id="RHEA:57720"/>
        <dbReference type="ChEBI" id="CHEBI:15377"/>
        <dbReference type="ChEBI" id="CHEBI:15378"/>
        <dbReference type="ChEBI" id="CHEBI:30616"/>
        <dbReference type="ChEBI" id="CHEBI:43474"/>
        <dbReference type="ChEBI" id="CHEBI:456216"/>
        <dbReference type="EC" id="7.1.2.2"/>
    </reaction>
</comment>
<comment type="subunit">
    <text evidence="1">F-type ATPases have 2 components, CF(1) - the catalytic core - and CF(0) - the membrane proton channel. CF(1) has five subunits: alpha(3), beta(3), gamma(1), delta(1), epsilon(1). CF(0) has four main subunits: a(1), b(1), b'(1) and c(9-12).</text>
</comment>
<comment type="subcellular location">
    <subcellularLocation>
        <location evidence="1">Plastid</location>
        <location evidence="1">Chloroplast thylakoid membrane</location>
        <topology evidence="1">Peripheral membrane protein</topology>
    </subcellularLocation>
</comment>
<comment type="similarity">
    <text evidence="1">Belongs to the ATPase alpha/beta chains family.</text>
</comment>